<accession>B0CCD6</accession>
<gene>
    <name evidence="1" type="primary">murC</name>
    <name type="ordered locus">AM1_1800</name>
</gene>
<protein>
    <recommendedName>
        <fullName evidence="1">UDP-N-acetylmuramate--L-alanine ligase</fullName>
        <ecNumber evidence="1">6.3.2.8</ecNumber>
    </recommendedName>
    <alternativeName>
        <fullName evidence="1">UDP-N-acetylmuramoyl-L-alanine synthetase</fullName>
    </alternativeName>
</protein>
<proteinExistence type="inferred from homology"/>
<sequence length="487" mass="52176">MQSAVDLGGRPIHFIGVGGIGMSALAHILLKRQLPISGSDARANHITQKLESQGAQIFSRQEATNIKQLCQGSSAPPQVICSTAIHEDNPEYQAAVQAGCPIFHRSDVLAALMQEFPQSIAIAGTHGKTTTSSLVGYLLLQASLDPTIIVGGEVAAWGGNARTGESPYLVAEADESDGSLVKFFPHIGVITNIELDHPDHYTSLDQVVSIFQEFVDHCHTLIVSVDCPTIADRFLALATDQSMITYSLSSKVSADYTVQNIDYSGQGTIVEVLERGESLGQLELPLLGEHNLSNALAAVAVGRYVGLEFPAIAKALRTFSGAKRRFEIYGEAQGICLIDDYAHHPSEIQVTLASAKLQAQAAAATYSQSRVVAVFQPHRYSRAATFFQEFSQSFQDADLVVVTDIYSAGEANPGTINGKKLADAIAANHSVVTFQPTLTNVIDFLQGHLQSGDVVLFLGAGDLNRIIPDLLTHFQVSSKPSPEVVLK</sequence>
<reference key="1">
    <citation type="journal article" date="2008" name="Proc. Natl. Acad. Sci. U.S.A.">
        <title>Niche adaptation and genome expansion in the chlorophyll d-producing cyanobacterium Acaryochloris marina.</title>
        <authorList>
            <person name="Swingley W.D."/>
            <person name="Chen M."/>
            <person name="Cheung P.C."/>
            <person name="Conrad A.L."/>
            <person name="Dejesa L.C."/>
            <person name="Hao J."/>
            <person name="Honchak B.M."/>
            <person name="Karbach L.E."/>
            <person name="Kurdoglu A."/>
            <person name="Lahiri S."/>
            <person name="Mastrian S.D."/>
            <person name="Miyashita H."/>
            <person name="Page L."/>
            <person name="Ramakrishna P."/>
            <person name="Satoh S."/>
            <person name="Sattley W.M."/>
            <person name="Shimada Y."/>
            <person name="Taylor H.L."/>
            <person name="Tomo T."/>
            <person name="Tsuchiya T."/>
            <person name="Wang Z.T."/>
            <person name="Raymond J."/>
            <person name="Mimuro M."/>
            <person name="Blankenship R.E."/>
            <person name="Touchman J.W."/>
        </authorList>
    </citation>
    <scope>NUCLEOTIDE SEQUENCE [LARGE SCALE GENOMIC DNA]</scope>
    <source>
        <strain>MBIC 11017</strain>
    </source>
</reference>
<dbReference type="EC" id="6.3.2.8" evidence="1"/>
<dbReference type="EMBL" id="CP000828">
    <property type="protein sequence ID" value="ABW26821.1"/>
    <property type="molecule type" value="Genomic_DNA"/>
</dbReference>
<dbReference type="RefSeq" id="WP_012162329.1">
    <property type="nucleotide sequence ID" value="NC_009925.1"/>
</dbReference>
<dbReference type="SMR" id="B0CCD6"/>
<dbReference type="STRING" id="329726.AM1_1800"/>
<dbReference type="KEGG" id="amr:AM1_1800"/>
<dbReference type="eggNOG" id="COG0773">
    <property type="taxonomic scope" value="Bacteria"/>
</dbReference>
<dbReference type="HOGENOM" id="CLU_028104_2_2_3"/>
<dbReference type="OrthoDB" id="9804126at2"/>
<dbReference type="UniPathway" id="UPA00219"/>
<dbReference type="Proteomes" id="UP000000268">
    <property type="component" value="Chromosome"/>
</dbReference>
<dbReference type="GO" id="GO:0005737">
    <property type="term" value="C:cytoplasm"/>
    <property type="evidence" value="ECO:0007669"/>
    <property type="project" value="UniProtKB-SubCell"/>
</dbReference>
<dbReference type="GO" id="GO:0005524">
    <property type="term" value="F:ATP binding"/>
    <property type="evidence" value="ECO:0007669"/>
    <property type="project" value="UniProtKB-UniRule"/>
</dbReference>
<dbReference type="GO" id="GO:0008763">
    <property type="term" value="F:UDP-N-acetylmuramate-L-alanine ligase activity"/>
    <property type="evidence" value="ECO:0007669"/>
    <property type="project" value="UniProtKB-UniRule"/>
</dbReference>
<dbReference type="GO" id="GO:0051301">
    <property type="term" value="P:cell division"/>
    <property type="evidence" value="ECO:0007669"/>
    <property type="project" value="UniProtKB-KW"/>
</dbReference>
<dbReference type="GO" id="GO:0071555">
    <property type="term" value="P:cell wall organization"/>
    <property type="evidence" value="ECO:0007669"/>
    <property type="project" value="UniProtKB-KW"/>
</dbReference>
<dbReference type="GO" id="GO:0009252">
    <property type="term" value="P:peptidoglycan biosynthetic process"/>
    <property type="evidence" value="ECO:0007669"/>
    <property type="project" value="UniProtKB-UniRule"/>
</dbReference>
<dbReference type="GO" id="GO:0008360">
    <property type="term" value="P:regulation of cell shape"/>
    <property type="evidence" value="ECO:0007669"/>
    <property type="project" value="UniProtKB-KW"/>
</dbReference>
<dbReference type="Gene3D" id="3.90.190.20">
    <property type="entry name" value="Mur ligase, C-terminal domain"/>
    <property type="match status" value="1"/>
</dbReference>
<dbReference type="Gene3D" id="3.40.1190.10">
    <property type="entry name" value="Mur-like, catalytic domain"/>
    <property type="match status" value="1"/>
</dbReference>
<dbReference type="Gene3D" id="3.40.50.720">
    <property type="entry name" value="NAD(P)-binding Rossmann-like Domain"/>
    <property type="match status" value="1"/>
</dbReference>
<dbReference type="HAMAP" id="MF_00046">
    <property type="entry name" value="MurC"/>
    <property type="match status" value="1"/>
</dbReference>
<dbReference type="InterPro" id="IPR036565">
    <property type="entry name" value="Mur-like_cat_sf"/>
</dbReference>
<dbReference type="InterPro" id="IPR004101">
    <property type="entry name" value="Mur_ligase_C"/>
</dbReference>
<dbReference type="InterPro" id="IPR036615">
    <property type="entry name" value="Mur_ligase_C_dom_sf"/>
</dbReference>
<dbReference type="InterPro" id="IPR013221">
    <property type="entry name" value="Mur_ligase_cen"/>
</dbReference>
<dbReference type="InterPro" id="IPR000713">
    <property type="entry name" value="Mur_ligase_N"/>
</dbReference>
<dbReference type="InterPro" id="IPR050061">
    <property type="entry name" value="MurCDEF_pg_biosynth"/>
</dbReference>
<dbReference type="InterPro" id="IPR005758">
    <property type="entry name" value="UDP-N-AcMur_Ala_ligase_MurC"/>
</dbReference>
<dbReference type="NCBIfam" id="TIGR01082">
    <property type="entry name" value="murC"/>
    <property type="match status" value="1"/>
</dbReference>
<dbReference type="PANTHER" id="PTHR43445:SF3">
    <property type="entry name" value="UDP-N-ACETYLMURAMATE--L-ALANINE LIGASE"/>
    <property type="match status" value="1"/>
</dbReference>
<dbReference type="PANTHER" id="PTHR43445">
    <property type="entry name" value="UDP-N-ACETYLMURAMATE--L-ALANINE LIGASE-RELATED"/>
    <property type="match status" value="1"/>
</dbReference>
<dbReference type="Pfam" id="PF01225">
    <property type="entry name" value="Mur_ligase"/>
    <property type="match status" value="1"/>
</dbReference>
<dbReference type="Pfam" id="PF02875">
    <property type="entry name" value="Mur_ligase_C"/>
    <property type="match status" value="1"/>
</dbReference>
<dbReference type="Pfam" id="PF08245">
    <property type="entry name" value="Mur_ligase_M"/>
    <property type="match status" value="1"/>
</dbReference>
<dbReference type="SUPFAM" id="SSF51984">
    <property type="entry name" value="MurCD N-terminal domain"/>
    <property type="match status" value="1"/>
</dbReference>
<dbReference type="SUPFAM" id="SSF53623">
    <property type="entry name" value="MurD-like peptide ligases, catalytic domain"/>
    <property type="match status" value="1"/>
</dbReference>
<dbReference type="SUPFAM" id="SSF53244">
    <property type="entry name" value="MurD-like peptide ligases, peptide-binding domain"/>
    <property type="match status" value="1"/>
</dbReference>
<name>MURC_ACAM1</name>
<feature type="chain" id="PRO_1000074727" description="UDP-N-acetylmuramate--L-alanine ligase">
    <location>
        <begin position="1"/>
        <end position="487"/>
    </location>
</feature>
<feature type="binding site" evidence="1">
    <location>
        <begin position="124"/>
        <end position="130"/>
    </location>
    <ligand>
        <name>ATP</name>
        <dbReference type="ChEBI" id="CHEBI:30616"/>
    </ligand>
</feature>
<keyword id="KW-0067">ATP-binding</keyword>
<keyword id="KW-0131">Cell cycle</keyword>
<keyword id="KW-0132">Cell division</keyword>
<keyword id="KW-0133">Cell shape</keyword>
<keyword id="KW-0961">Cell wall biogenesis/degradation</keyword>
<keyword id="KW-0963">Cytoplasm</keyword>
<keyword id="KW-0436">Ligase</keyword>
<keyword id="KW-0547">Nucleotide-binding</keyword>
<keyword id="KW-0573">Peptidoglycan synthesis</keyword>
<keyword id="KW-1185">Reference proteome</keyword>
<evidence type="ECO:0000255" key="1">
    <source>
        <dbReference type="HAMAP-Rule" id="MF_00046"/>
    </source>
</evidence>
<organism>
    <name type="scientific">Acaryochloris marina (strain MBIC 11017)</name>
    <dbReference type="NCBI Taxonomy" id="329726"/>
    <lineage>
        <taxon>Bacteria</taxon>
        <taxon>Bacillati</taxon>
        <taxon>Cyanobacteriota</taxon>
        <taxon>Cyanophyceae</taxon>
        <taxon>Acaryochloridales</taxon>
        <taxon>Acaryochloridaceae</taxon>
        <taxon>Acaryochloris</taxon>
    </lineage>
</organism>
<comment type="function">
    <text evidence="1">Cell wall formation.</text>
</comment>
<comment type="catalytic activity">
    <reaction evidence="1">
        <text>UDP-N-acetyl-alpha-D-muramate + L-alanine + ATP = UDP-N-acetyl-alpha-D-muramoyl-L-alanine + ADP + phosphate + H(+)</text>
        <dbReference type="Rhea" id="RHEA:23372"/>
        <dbReference type="ChEBI" id="CHEBI:15378"/>
        <dbReference type="ChEBI" id="CHEBI:30616"/>
        <dbReference type="ChEBI" id="CHEBI:43474"/>
        <dbReference type="ChEBI" id="CHEBI:57972"/>
        <dbReference type="ChEBI" id="CHEBI:70757"/>
        <dbReference type="ChEBI" id="CHEBI:83898"/>
        <dbReference type="ChEBI" id="CHEBI:456216"/>
        <dbReference type="EC" id="6.3.2.8"/>
    </reaction>
</comment>
<comment type="pathway">
    <text evidence="1">Cell wall biogenesis; peptidoglycan biosynthesis.</text>
</comment>
<comment type="subcellular location">
    <subcellularLocation>
        <location evidence="1">Cytoplasm</location>
    </subcellularLocation>
</comment>
<comment type="similarity">
    <text evidence="1">Belongs to the MurCDEF family.</text>
</comment>